<accession>A9KUC1</accession>
<organism>
    <name type="scientific">Shewanella baltica (strain OS195)</name>
    <dbReference type="NCBI Taxonomy" id="399599"/>
    <lineage>
        <taxon>Bacteria</taxon>
        <taxon>Pseudomonadati</taxon>
        <taxon>Pseudomonadota</taxon>
        <taxon>Gammaproteobacteria</taxon>
        <taxon>Alteromonadales</taxon>
        <taxon>Shewanellaceae</taxon>
        <taxon>Shewanella</taxon>
    </lineage>
</organism>
<gene>
    <name evidence="1" type="primary">gpsA</name>
    <name type="ordered locus">Sbal195_0050</name>
</gene>
<dbReference type="EC" id="1.1.1.94" evidence="1"/>
<dbReference type="EMBL" id="CP000891">
    <property type="protein sequence ID" value="ABX47232.1"/>
    <property type="molecule type" value="Genomic_DNA"/>
</dbReference>
<dbReference type="RefSeq" id="WP_012196477.1">
    <property type="nucleotide sequence ID" value="NC_009997.1"/>
</dbReference>
<dbReference type="SMR" id="A9KUC1"/>
<dbReference type="GeneID" id="11770418"/>
<dbReference type="KEGG" id="sbn:Sbal195_0050"/>
<dbReference type="HOGENOM" id="CLU_033449_0_2_6"/>
<dbReference type="UniPathway" id="UPA00940"/>
<dbReference type="Proteomes" id="UP000000770">
    <property type="component" value="Chromosome"/>
</dbReference>
<dbReference type="GO" id="GO:0005829">
    <property type="term" value="C:cytosol"/>
    <property type="evidence" value="ECO:0007669"/>
    <property type="project" value="TreeGrafter"/>
</dbReference>
<dbReference type="GO" id="GO:0047952">
    <property type="term" value="F:glycerol-3-phosphate dehydrogenase [NAD(P)+] activity"/>
    <property type="evidence" value="ECO:0007669"/>
    <property type="project" value="UniProtKB-UniRule"/>
</dbReference>
<dbReference type="GO" id="GO:0051287">
    <property type="term" value="F:NAD binding"/>
    <property type="evidence" value="ECO:0007669"/>
    <property type="project" value="InterPro"/>
</dbReference>
<dbReference type="GO" id="GO:0005975">
    <property type="term" value="P:carbohydrate metabolic process"/>
    <property type="evidence" value="ECO:0007669"/>
    <property type="project" value="InterPro"/>
</dbReference>
<dbReference type="GO" id="GO:0046167">
    <property type="term" value="P:glycerol-3-phosphate biosynthetic process"/>
    <property type="evidence" value="ECO:0007669"/>
    <property type="project" value="UniProtKB-UniRule"/>
</dbReference>
<dbReference type="GO" id="GO:0046168">
    <property type="term" value="P:glycerol-3-phosphate catabolic process"/>
    <property type="evidence" value="ECO:0007669"/>
    <property type="project" value="InterPro"/>
</dbReference>
<dbReference type="GO" id="GO:0046474">
    <property type="term" value="P:glycerophospholipid biosynthetic process"/>
    <property type="evidence" value="ECO:0007669"/>
    <property type="project" value="TreeGrafter"/>
</dbReference>
<dbReference type="FunFam" id="1.10.1040.10:FF:000001">
    <property type="entry name" value="Glycerol-3-phosphate dehydrogenase [NAD(P)+]"/>
    <property type="match status" value="1"/>
</dbReference>
<dbReference type="FunFam" id="3.40.50.720:FF:000019">
    <property type="entry name" value="Glycerol-3-phosphate dehydrogenase [NAD(P)+]"/>
    <property type="match status" value="1"/>
</dbReference>
<dbReference type="Gene3D" id="1.10.1040.10">
    <property type="entry name" value="N-(1-d-carboxylethyl)-l-norvaline Dehydrogenase, domain 2"/>
    <property type="match status" value="1"/>
</dbReference>
<dbReference type="Gene3D" id="3.40.50.720">
    <property type="entry name" value="NAD(P)-binding Rossmann-like Domain"/>
    <property type="match status" value="1"/>
</dbReference>
<dbReference type="HAMAP" id="MF_00394">
    <property type="entry name" value="NAD_Glyc3P_dehydrog"/>
    <property type="match status" value="1"/>
</dbReference>
<dbReference type="InterPro" id="IPR008927">
    <property type="entry name" value="6-PGluconate_DH-like_C_sf"/>
</dbReference>
<dbReference type="InterPro" id="IPR013328">
    <property type="entry name" value="6PGD_dom2"/>
</dbReference>
<dbReference type="InterPro" id="IPR006168">
    <property type="entry name" value="G3P_DH_NAD-dep"/>
</dbReference>
<dbReference type="InterPro" id="IPR006109">
    <property type="entry name" value="G3P_DH_NAD-dep_C"/>
</dbReference>
<dbReference type="InterPro" id="IPR011128">
    <property type="entry name" value="G3P_DH_NAD-dep_N"/>
</dbReference>
<dbReference type="InterPro" id="IPR036291">
    <property type="entry name" value="NAD(P)-bd_dom_sf"/>
</dbReference>
<dbReference type="NCBIfam" id="NF000939">
    <property type="entry name" value="PRK00094.1-1"/>
    <property type="match status" value="1"/>
</dbReference>
<dbReference type="NCBIfam" id="NF000940">
    <property type="entry name" value="PRK00094.1-2"/>
    <property type="match status" value="1"/>
</dbReference>
<dbReference type="NCBIfam" id="NF000942">
    <property type="entry name" value="PRK00094.1-4"/>
    <property type="match status" value="1"/>
</dbReference>
<dbReference type="PANTHER" id="PTHR11728">
    <property type="entry name" value="GLYCEROL-3-PHOSPHATE DEHYDROGENASE"/>
    <property type="match status" value="1"/>
</dbReference>
<dbReference type="PANTHER" id="PTHR11728:SF1">
    <property type="entry name" value="GLYCEROL-3-PHOSPHATE DEHYDROGENASE [NAD(+)] 2, CHLOROPLASTIC"/>
    <property type="match status" value="1"/>
</dbReference>
<dbReference type="Pfam" id="PF07479">
    <property type="entry name" value="NAD_Gly3P_dh_C"/>
    <property type="match status" value="1"/>
</dbReference>
<dbReference type="Pfam" id="PF01210">
    <property type="entry name" value="NAD_Gly3P_dh_N"/>
    <property type="match status" value="1"/>
</dbReference>
<dbReference type="PIRSF" id="PIRSF000114">
    <property type="entry name" value="Glycerol-3-P_dh"/>
    <property type="match status" value="1"/>
</dbReference>
<dbReference type="PRINTS" id="PR00077">
    <property type="entry name" value="GPDHDRGNASE"/>
</dbReference>
<dbReference type="SUPFAM" id="SSF48179">
    <property type="entry name" value="6-phosphogluconate dehydrogenase C-terminal domain-like"/>
    <property type="match status" value="1"/>
</dbReference>
<dbReference type="SUPFAM" id="SSF51735">
    <property type="entry name" value="NAD(P)-binding Rossmann-fold domains"/>
    <property type="match status" value="1"/>
</dbReference>
<dbReference type="PROSITE" id="PS00957">
    <property type="entry name" value="NAD_G3PDH"/>
    <property type="match status" value="1"/>
</dbReference>
<feature type="chain" id="PRO_1000080316" description="Glycerol-3-phosphate dehydrogenase [NAD(P)+]">
    <location>
        <begin position="1"/>
        <end position="338"/>
    </location>
</feature>
<feature type="active site" description="Proton acceptor" evidence="1">
    <location>
        <position position="194"/>
    </location>
</feature>
<feature type="binding site" evidence="1">
    <location>
        <position position="14"/>
    </location>
    <ligand>
        <name>NADPH</name>
        <dbReference type="ChEBI" id="CHEBI:57783"/>
    </ligand>
</feature>
<feature type="binding site" evidence="1">
    <location>
        <position position="15"/>
    </location>
    <ligand>
        <name>NADPH</name>
        <dbReference type="ChEBI" id="CHEBI:57783"/>
    </ligand>
</feature>
<feature type="binding site" evidence="1">
    <location>
        <position position="35"/>
    </location>
    <ligand>
        <name>NADPH</name>
        <dbReference type="ChEBI" id="CHEBI:57783"/>
    </ligand>
</feature>
<feature type="binding site" evidence="1">
    <location>
        <position position="109"/>
    </location>
    <ligand>
        <name>NADPH</name>
        <dbReference type="ChEBI" id="CHEBI:57783"/>
    </ligand>
</feature>
<feature type="binding site" evidence="1">
    <location>
        <position position="109"/>
    </location>
    <ligand>
        <name>sn-glycerol 3-phosphate</name>
        <dbReference type="ChEBI" id="CHEBI:57597"/>
    </ligand>
</feature>
<feature type="binding site" evidence="1">
    <location>
        <position position="138"/>
    </location>
    <ligand>
        <name>sn-glycerol 3-phosphate</name>
        <dbReference type="ChEBI" id="CHEBI:57597"/>
    </ligand>
</feature>
<feature type="binding site" evidence="1">
    <location>
        <position position="140"/>
    </location>
    <ligand>
        <name>sn-glycerol 3-phosphate</name>
        <dbReference type="ChEBI" id="CHEBI:57597"/>
    </ligand>
</feature>
<feature type="binding site" evidence="1">
    <location>
        <position position="142"/>
    </location>
    <ligand>
        <name>NADPH</name>
        <dbReference type="ChEBI" id="CHEBI:57783"/>
    </ligand>
</feature>
<feature type="binding site" evidence="1">
    <location>
        <position position="194"/>
    </location>
    <ligand>
        <name>sn-glycerol 3-phosphate</name>
        <dbReference type="ChEBI" id="CHEBI:57597"/>
    </ligand>
</feature>
<feature type="binding site" evidence="1">
    <location>
        <position position="247"/>
    </location>
    <ligand>
        <name>sn-glycerol 3-phosphate</name>
        <dbReference type="ChEBI" id="CHEBI:57597"/>
    </ligand>
</feature>
<feature type="binding site" evidence="1">
    <location>
        <position position="257"/>
    </location>
    <ligand>
        <name>sn-glycerol 3-phosphate</name>
        <dbReference type="ChEBI" id="CHEBI:57597"/>
    </ligand>
</feature>
<feature type="binding site" evidence="1">
    <location>
        <position position="258"/>
    </location>
    <ligand>
        <name>NADPH</name>
        <dbReference type="ChEBI" id="CHEBI:57783"/>
    </ligand>
</feature>
<feature type="binding site" evidence="1">
    <location>
        <position position="258"/>
    </location>
    <ligand>
        <name>sn-glycerol 3-phosphate</name>
        <dbReference type="ChEBI" id="CHEBI:57597"/>
    </ligand>
</feature>
<feature type="binding site" evidence="1">
    <location>
        <position position="259"/>
    </location>
    <ligand>
        <name>sn-glycerol 3-phosphate</name>
        <dbReference type="ChEBI" id="CHEBI:57597"/>
    </ligand>
</feature>
<feature type="binding site" evidence="1">
    <location>
        <position position="282"/>
    </location>
    <ligand>
        <name>NADPH</name>
        <dbReference type="ChEBI" id="CHEBI:57783"/>
    </ligand>
</feature>
<feature type="binding site" evidence="1">
    <location>
        <position position="284"/>
    </location>
    <ligand>
        <name>NADPH</name>
        <dbReference type="ChEBI" id="CHEBI:57783"/>
    </ligand>
</feature>
<sequence>MKNSADITVLGAGSYGSALAISLASNGHKTLLWGHDPVHMQTLAQDKCNQAFLPGIAFPDCLQIEADLAKALAASNNVLVVVPSHVFGTVLEQAKPLLRSDARIVWATKGLEPETGRLLQDVARDVLGEQYPLAVLSGPTFAKELAMGLPTAISVAGTCPTFTNDLVELLHSPKRLRVYANDDFTGLQLGGAVKNVIAIGAGMSDGIGFGANARTALITRGLVELTRLGEALGANAATFMGMAGLGDLVLTCTDNQSRNRRFGLALGKGCDVMTAQAEIGQVVEGYRNTKEVFTLAKRLGVEMPITEQIYQVLYQGKSPVDAAKELLSREKKSETPAQ</sequence>
<evidence type="ECO:0000255" key="1">
    <source>
        <dbReference type="HAMAP-Rule" id="MF_00394"/>
    </source>
</evidence>
<name>GPDA_SHEB9</name>
<reference key="1">
    <citation type="submission" date="2007-11" db="EMBL/GenBank/DDBJ databases">
        <title>Complete sequence of chromosome of Shewanella baltica OS195.</title>
        <authorList>
            <consortium name="US DOE Joint Genome Institute"/>
            <person name="Copeland A."/>
            <person name="Lucas S."/>
            <person name="Lapidus A."/>
            <person name="Barry K."/>
            <person name="Glavina del Rio T."/>
            <person name="Dalin E."/>
            <person name="Tice H."/>
            <person name="Pitluck S."/>
            <person name="Chain P."/>
            <person name="Malfatti S."/>
            <person name="Shin M."/>
            <person name="Vergez L."/>
            <person name="Schmutz J."/>
            <person name="Larimer F."/>
            <person name="Land M."/>
            <person name="Hauser L."/>
            <person name="Kyrpides N."/>
            <person name="Kim E."/>
            <person name="Brettar I."/>
            <person name="Rodrigues J."/>
            <person name="Konstantinidis K."/>
            <person name="Klappenbach J."/>
            <person name="Hofle M."/>
            <person name="Tiedje J."/>
            <person name="Richardson P."/>
        </authorList>
    </citation>
    <scope>NUCLEOTIDE SEQUENCE [LARGE SCALE GENOMIC DNA]</scope>
    <source>
        <strain>OS195</strain>
    </source>
</reference>
<protein>
    <recommendedName>
        <fullName evidence="1">Glycerol-3-phosphate dehydrogenase [NAD(P)+]</fullName>
        <ecNumber evidence="1">1.1.1.94</ecNumber>
    </recommendedName>
    <alternativeName>
        <fullName evidence="1">NAD(P)(+)-dependent glycerol-3-phosphate dehydrogenase</fullName>
    </alternativeName>
    <alternativeName>
        <fullName evidence="1">NAD(P)H-dependent dihydroxyacetone-phosphate reductase</fullName>
    </alternativeName>
</protein>
<comment type="function">
    <text evidence="1">Catalyzes the reduction of the glycolytic intermediate dihydroxyacetone phosphate (DHAP) to sn-glycerol 3-phosphate (G3P), the key precursor for phospholipid synthesis.</text>
</comment>
<comment type="catalytic activity">
    <reaction evidence="1">
        <text>sn-glycerol 3-phosphate + NAD(+) = dihydroxyacetone phosphate + NADH + H(+)</text>
        <dbReference type="Rhea" id="RHEA:11092"/>
        <dbReference type="ChEBI" id="CHEBI:15378"/>
        <dbReference type="ChEBI" id="CHEBI:57540"/>
        <dbReference type="ChEBI" id="CHEBI:57597"/>
        <dbReference type="ChEBI" id="CHEBI:57642"/>
        <dbReference type="ChEBI" id="CHEBI:57945"/>
        <dbReference type="EC" id="1.1.1.94"/>
    </reaction>
    <physiologicalReaction direction="right-to-left" evidence="1">
        <dbReference type="Rhea" id="RHEA:11094"/>
    </physiologicalReaction>
</comment>
<comment type="catalytic activity">
    <reaction evidence="1">
        <text>sn-glycerol 3-phosphate + NADP(+) = dihydroxyacetone phosphate + NADPH + H(+)</text>
        <dbReference type="Rhea" id="RHEA:11096"/>
        <dbReference type="ChEBI" id="CHEBI:15378"/>
        <dbReference type="ChEBI" id="CHEBI:57597"/>
        <dbReference type="ChEBI" id="CHEBI:57642"/>
        <dbReference type="ChEBI" id="CHEBI:57783"/>
        <dbReference type="ChEBI" id="CHEBI:58349"/>
        <dbReference type="EC" id="1.1.1.94"/>
    </reaction>
    <physiologicalReaction direction="right-to-left" evidence="1">
        <dbReference type="Rhea" id="RHEA:11098"/>
    </physiologicalReaction>
</comment>
<comment type="pathway">
    <text evidence="1">Membrane lipid metabolism; glycerophospholipid metabolism.</text>
</comment>
<comment type="subcellular location">
    <subcellularLocation>
        <location evidence="1">Cytoplasm</location>
    </subcellularLocation>
</comment>
<comment type="similarity">
    <text evidence="1">Belongs to the NAD-dependent glycerol-3-phosphate dehydrogenase family.</text>
</comment>
<proteinExistence type="inferred from homology"/>
<keyword id="KW-0963">Cytoplasm</keyword>
<keyword id="KW-0444">Lipid biosynthesis</keyword>
<keyword id="KW-0443">Lipid metabolism</keyword>
<keyword id="KW-0520">NAD</keyword>
<keyword id="KW-0521">NADP</keyword>
<keyword id="KW-0547">Nucleotide-binding</keyword>
<keyword id="KW-0560">Oxidoreductase</keyword>
<keyword id="KW-0594">Phospholipid biosynthesis</keyword>
<keyword id="KW-1208">Phospholipid metabolism</keyword>